<reference key="1">
    <citation type="journal article" date="2006" name="Science">
        <title>Genomic islands and the ecology and evolution of Prochlorococcus.</title>
        <authorList>
            <person name="Coleman M.L."/>
            <person name="Sullivan M.B."/>
            <person name="Martiny A.C."/>
            <person name="Steglich C."/>
            <person name="Barry K."/>
            <person name="Delong E.F."/>
            <person name="Chisholm S.W."/>
        </authorList>
    </citation>
    <scope>NUCLEOTIDE SEQUENCE [LARGE SCALE GENOMIC DNA]</scope>
    <source>
        <strain>MIT 9312</strain>
    </source>
</reference>
<gene>
    <name evidence="1" type="primary">ndhC</name>
    <name type="ordered locus">PMT9312_0296</name>
</gene>
<keyword id="KW-0472">Membrane</keyword>
<keyword id="KW-0520">NAD</keyword>
<keyword id="KW-0521">NADP</keyword>
<keyword id="KW-0618">Plastoquinone</keyword>
<keyword id="KW-0874">Quinone</keyword>
<keyword id="KW-0793">Thylakoid</keyword>
<keyword id="KW-1278">Translocase</keyword>
<keyword id="KW-0812">Transmembrane</keyword>
<keyword id="KW-1133">Transmembrane helix</keyword>
<keyword id="KW-0813">Transport</keyword>
<evidence type="ECO:0000255" key="1">
    <source>
        <dbReference type="HAMAP-Rule" id="MF_01394"/>
    </source>
</evidence>
<protein>
    <recommendedName>
        <fullName evidence="1">NAD(P)H-quinone oxidoreductase subunit 3</fullName>
        <ecNumber evidence="1">7.1.1.-</ecNumber>
    </recommendedName>
    <alternativeName>
        <fullName evidence="1">NAD(P)H dehydrogenase subunit 3</fullName>
    </alternativeName>
    <alternativeName>
        <fullName evidence="1">NADH-plastoquinone oxidoreductase subunit 3</fullName>
    </alternativeName>
    <alternativeName>
        <fullName evidence="1">NDH-1 subunit 3</fullName>
        <shortName evidence="1">NDH-C</shortName>
    </alternativeName>
</protein>
<dbReference type="EC" id="7.1.1.-" evidence="1"/>
<dbReference type="EMBL" id="CP000111">
    <property type="protein sequence ID" value="ABB49357.1"/>
    <property type="molecule type" value="Genomic_DNA"/>
</dbReference>
<dbReference type="RefSeq" id="WP_011375859.1">
    <property type="nucleotide sequence ID" value="NC_007577.1"/>
</dbReference>
<dbReference type="SMR" id="Q31CN8"/>
<dbReference type="STRING" id="74546.PMT9312_0296"/>
<dbReference type="KEGG" id="pmi:PMT9312_0296"/>
<dbReference type="eggNOG" id="COG0838">
    <property type="taxonomic scope" value="Bacteria"/>
</dbReference>
<dbReference type="HOGENOM" id="CLU_119549_1_1_3"/>
<dbReference type="OrthoDB" id="9791970at2"/>
<dbReference type="Proteomes" id="UP000002715">
    <property type="component" value="Chromosome"/>
</dbReference>
<dbReference type="GO" id="GO:0030964">
    <property type="term" value="C:NADH dehydrogenase complex"/>
    <property type="evidence" value="ECO:0007669"/>
    <property type="project" value="TreeGrafter"/>
</dbReference>
<dbReference type="GO" id="GO:0031676">
    <property type="term" value="C:plasma membrane-derived thylakoid membrane"/>
    <property type="evidence" value="ECO:0007669"/>
    <property type="project" value="UniProtKB-SubCell"/>
</dbReference>
<dbReference type="GO" id="GO:0008137">
    <property type="term" value="F:NADH dehydrogenase (ubiquinone) activity"/>
    <property type="evidence" value="ECO:0007669"/>
    <property type="project" value="InterPro"/>
</dbReference>
<dbReference type="GO" id="GO:0048038">
    <property type="term" value="F:quinone binding"/>
    <property type="evidence" value="ECO:0007669"/>
    <property type="project" value="UniProtKB-KW"/>
</dbReference>
<dbReference type="GO" id="GO:0019684">
    <property type="term" value="P:photosynthesis, light reaction"/>
    <property type="evidence" value="ECO:0007669"/>
    <property type="project" value="UniProtKB-UniRule"/>
</dbReference>
<dbReference type="Gene3D" id="1.20.58.1610">
    <property type="entry name" value="NADH:ubiquinone/plastoquinone oxidoreductase, chain 3"/>
    <property type="match status" value="1"/>
</dbReference>
<dbReference type="HAMAP" id="MF_01394">
    <property type="entry name" value="NDH1_NuoA"/>
    <property type="match status" value="1"/>
</dbReference>
<dbReference type="InterPro" id="IPR023043">
    <property type="entry name" value="NAD(P)H_OxRDtase_bac/plastid"/>
</dbReference>
<dbReference type="InterPro" id="IPR000440">
    <property type="entry name" value="NADH_UbQ/plastoQ_OxRdtase_su3"/>
</dbReference>
<dbReference type="InterPro" id="IPR038430">
    <property type="entry name" value="NDAH_ubi_oxred_su3_sf"/>
</dbReference>
<dbReference type="PANTHER" id="PTHR11058">
    <property type="entry name" value="NADH-UBIQUINONE OXIDOREDUCTASE CHAIN 3"/>
    <property type="match status" value="1"/>
</dbReference>
<dbReference type="PANTHER" id="PTHR11058:SF9">
    <property type="entry name" value="NADH-UBIQUINONE OXIDOREDUCTASE CHAIN 3"/>
    <property type="match status" value="1"/>
</dbReference>
<dbReference type="Pfam" id="PF00507">
    <property type="entry name" value="Oxidored_q4"/>
    <property type="match status" value="1"/>
</dbReference>
<sequence length="120" mass="13578">MFLLTGYEYFLGFLLIAAAVPILALVTNLIVAPKGRTGERKLTYESGMEPIGGAWIQFNIRYYMFALVFVIFDVETVFLYPWAVAFNRLGLLAFIEALIFIAILVIALAYAWRKGALEWS</sequence>
<name>NU3C_PROM9</name>
<organism>
    <name type="scientific">Prochlorococcus marinus (strain MIT 9312)</name>
    <dbReference type="NCBI Taxonomy" id="74546"/>
    <lineage>
        <taxon>Bacteria</taxon>
        <taxon>Bacillati</taxon>
        <taxon>Cyanobacteriota</taxon>
        <taxon>Cyanophyceae</taxon>
        <taxon>Synechococcales</taxon>
        <taxon>Prochlorococcaceae</taxon>
        <taxon>Prochlorococcus</taxon>
    </lineage>
</organism>
<proteinExistence type="inferred from homology"/>
<feature type="chain" id="PRO_0000362724" description="NAD(P)H-quinone oxidoreductase subunit 3">
    <location>
        <begin position="1"/>
        <end position="120"/>
    </location>
</feature>
<feature type="transmembrane region" description="Helical" evidence="1">
    <location>
        <begin position="10"/>
        <end position="30"/>
    </location>
</feature>
<feature type="transmembrane region" description="Helical" evidence="1">
    <location>
        <begin position="64"/>
        <end position="84"/>
    </location>
</feature>
<feature type="transmembrane region" description="Helical" evidence="1">
    <location>
        <begin position="89"/>
        <end position="109"/>
    </location>
</feature>
<comment type="function">
    <text evidence="1">NDH-1 shuttles electrons from an unknown electron donor, via FMN and iron-sulfur (Fe-S) centers, to quinones in the respiratory and/or the photosynthetic chain. The immediate electron acceptor for the enzyme in this species is believed to be plastoquinone. Couples the redox reaction to proton translocation, and thus conserves the redox energy in a proton gradient. Cyanobacterial NDH-1 also plays a role in inorganic carbon-concentration.</text>
</comment>
<comment type="catalytic activity">
    <reaction evidence="1">
        <text>a plastoquinone + NADH + (n+1) H(+)(in) = a plastoquinol + NAD(+) + n H(+)(out)</text>
        <dbReference type="Rhea" id="RHEA:42608"/>
        <dbReference type="Rhea" id="RHEA-COMP:9561"/>
        <dbReference type="Rhea" id="RHEA-COMP:9562"/>
        <dbReference type="ChEBI" id="CHEBI:15378"/>
        <dbReference type="ChEBI" id="CHEBI:17757"/>
        <dbReference type="ChEBI" id="CHEBI:57540"/>
        <dbReference type="ChEBI" id="CHEBI:57945"/>
        <dbReference type="ChEBI" id="CHEBI:62192"/>
    </reaction>
</comment>
<comment type="catalytic activity">
    <reaction evidence="1">
        <text>a plastoquinone + NADPH + (n+1) H(+)(in) = a plastoquinol + NADP(+) + n H(+)(out)</text>
        <dbReference type="Rhea" id="RHEA:42612"/>
        <dbReference type="Rhea" id="RHEA-COMP:9561"/>
        <dbReference type="Rhea" id="RHEA-COMP:9562"/>
        <dbReference type="ChEBI" id="CHEBI:15378"/>
        <dbReference type="ChEBI" id="CHEBI:17757"/>
        <dbReference type="ChEBI" id="CHEBI:57783"/>
        <dbReference type="ChEBI" id="CHEBI:58349"/>
        <dbReference type="ChEBI" id="CHEBI:62192"/>
    </reaction>
</comment>
<comment type="subunit">
    <text evidence="1">NDH-1 can be composed of about 15 different subunits; different subcomplexes with different compositions have been identified which probably have different functions.</text>
</comment>
<comment type="subcellular location">
    <subcellularLocation>
        <location evidence="1">Cellular thylakoid membrane</location>
        <topology evidence="1">Multi-pass membrane protein</topology>
    </subcellularLocation>
</comment>
<comment type="similarity">
    <text evidence="1">Belongs to the complex I subunit 3 family.</text>
</comment>
<accession>Q31CN8</accession>